<sequence>MLQLREPQMVHKHLKLAVLGIVVIFTTYFIISSLSSPTSTHKTEYNSPKLQLAKELELNSNWKELGLNFQPNKKYSLPDESTLRQQLSYQFPYDESKPFPKNIWQTWKVGIDEKSFPKRYLKYQQTWEDKNPDYKHYVVPDKQCDLLIEQLYSQVPDVAKAYRIMPKSILKADFFRYLILFARGGVYTDIDTVGLKPVDEWISNSEMILEKKNRSGLVVGIEADPDRPDWADWYARRIQFCQWTIQSKRGHPMLRELIAKITDITLTRHKKGQLKKVLGKNEGGDIMNWTGPGIFTDTVFEYMNNILQSPEVFKNKKKWATIIDWKLFTGMEQPIAIDDVLVLPITSFSPDVNQMGAKDSHDPMAYAKHMFSGSWKDDGMPEMEQ</sequence>
<protein>
    <recommendedName>
        <fullName evidence="11">Initiation-specific alpha-1,6-mannosyltransferase</fullName>
        <ecNumber evidence="1">2.4.1.232</ecNumber>
    </recommendedName>
    <alternativeName>
        <fullName evidence="1">Outer chain elongation protein 1</fullName>
    </alternativeName>
</protein>
<organism>
    <name type="scientific">Candida albicans (strain SC5314 / ATCC MYA-2876)</name>
    <name type="common">Yeast</name>
    <dbReference type="NCBI Taxonomy" id="237561"/>
    <lineage>
        <taxon>Eukaryota</taxon>
        <taxon>Fungi</taxon>
        <taxon>Dikarya</taxon>
        <taxon>Ascomycota</taxon>
        <taxon>Saccharomycotina</taxon>
        <taxon>Pichiomycetes</taxon>
        <taxon>Debaryomycetaceae</taxon>
        <taxon>Candida/Lodderomyces clade</taxon>
        <taxon>Candida</taxon>
    </lineage>
</organism>
<accession>Q5A4E3</accession>
<accession>A0A1D8PKE6</accession>
<keyword id="KW-0256">Endoplasmic reticulum</keyword>
<keyword id="KW-0328">Glycosyltransferase</keyword>
<keyword id="KW-0333">Golgi apparatus</keyword>
<keyword id="KW-0472">Membrane</keyword>
<keyword id="KW-1185">Reference proteome</keyword>
<keyword id="KW-0735">Signal-anchor</keyword>
<keyword id="KW-0808">Transferase</keyword>
<keyword id="KW-0812">Transmembrane</keyword>
<keyword id="KW-1133">Transmembrane helix</keyword>
<keyword id="KW-0843">Virulence</keyword>
<name>OCH1_CANAL</name>
<gene>
    <name evidence="10" type="primary">OCH1</name>
    <name type="ordered locus">CAALFM_C306090CA</name>
    <name type="ORF">CaO19.7391</name>
</gene>
<proteinExistence type="inferred from homology"/>
<feature type="chain" id="PRO_0000430618" description="Initiation-specific alpha-1,6-mannosyltransferase">
    <location>
        <begin position="1"/>
        <end position="385"/>
    </location>
</feature>
<feature type="topological domain" description="Cytoplasmic" evidence="1">
    <location>
        <begin position="1"/>
        <end position="15"/>
    </location>
</feature>
<feature type="transmembrane region" description="Helical; Signal-anchor for type II membrane protein" evidence="2">
    <location>
        <begin position="16"/>
        <end position="36"/>
    </location>
</feature>
<feature type="topological domain" description="Lumenal" evidence="1">
    <location>
        <begin position="37"/>
        <end position="385"/>
    </location>
</feature>
<feature type="short sequence motif" description="DXD motif" evidence="1">
    <location>
        <begin position="189"/>
        <end position="191"/>
    </location>
</feature>
<comment type="function">
    <text evidence="1 3 4 6 7 8 9">Mannosyltransferase involved in outer chain elongation of asparagine-linked oligosaccharides of the type Man(9)GlcNAc(2). Adds the first alpha-1,6-mannose to the Man(8)GlcNAc(2) and Man(9)GlcNAc(2), but not Man(5)GlcNAc(2), endoplasmic reticulum intermediates (By similarity). Represents the first enzymatic event required for synthesis of outer chain mannose linkages on yeast secretory proteins. N-glycan outer chain epitopes play a crucial role in the host-fungal interaction, virulence, and host immune response such as interleukin synthesis or phagocytosis by neutrophils.</text>
</comment>
<comment type="catalytic activity">
    <reaction evidence="1">
        <text>Transfers an alpha-D-mannosyl residue from GDP-mannose into lipid-linked oligosaccharide, forming an alpha-(1-&gt;6)-D-mannosyl-D-mannose linkage.</text>
        <dbReference type="EC" id="2.4.1.232"/>
    </reaction>
</comment>
<comment type="cofactor">
    <cofactor evidence="1">
        <name>Mn(2+)</name>
        <dbReference type="ChEBI" id="CHEBI:29035"/>
    </cofactor>
</comment>
<comment type="subcellular location">
    <subcellularLocation>
        <location evidence="1">Endoplasmic reticulum membrane</location>
        <topology evidence="1">Single-pass type II membrane protein</topology>
    </subcellularLocation>
    <subcellularLocation>
        <location evidence="5">Golgi apparatus membrane</location>
        <topology evidence="1">Single-pass type II membrane protein</topology>
    </subcellularLocation>
    <text evidence="1">Is recycled between the trans-Golgi network and a late compartment of the endoplasmic reticulum.</text>
</comment>
<comment type="domain">
    <text evidence="1">The conserved DXD motif is involved in enzyme activity.</text>
</comment>
<comment type="disruption phenotype">
    <text evidence="3 4 6 7 8 9">Results in a temperature-sensitive growth defect, cellular aggregation, loss of outer chain elongation of N-glycans, hypersensitivity to a range of cell wall perturbing agents, as well as to constitutively activated cell wall integrity pathway. Finally, leads to attenuated virulence in a mouse model of systemic infection and affects inflammatory response and the efficiency of neutrophil phagocytosis by the host.</text>
</comment>
<comment type="similarity">
    <text evidence="11">Belongs to the glycosyltransferase 32 family.</text>
</comment>
<dbReference type="EC" id="2.4.1.232" evidence="1"/>
<dbReference type="EMBL" id="CP017625">
    <property type="protein sequence ID" value="AOW28617.1"/>
    <property type="molecule type" value="Genomic_DNA"/>
</dbReference>
<dbReference type="RefSeq" id="XP_716632.1">
    <property type="nucleotide sequence ID" value="XM_711539.1"/>
</dbReference>
<dbReference type="BioGRID" id="1224845">
    <property type="interactions" value="2"/>
</dbReference>
<dbReference type="FunCoup" id="Q5A4E3">
    <property type="interactions" value="66"/>
</dbReference>
<dbReference type="STRING" id="237561.Q5A4E3"/>
<dbReference type="EnsemblFungi" id="C3_06090C_A-T">
    <property type="protein sequence ID" value="C3_06090C_A-T-p1"/>
    <property type="gene ID" value="C3_06090C_A"/>
</dbReference>
<dbReference type="GeneID" id="3641751"/>
<dbReference type="KEGG" id="cal:CAALFM_C306090CA"/>
<dbReference type="CGD" id="CAL0000174808">
    <property type="gene designation" value="OCH1"/>
</dbReference>
<dbReference type="VEuPathDB" id="FungiDB:C3_06090C_A"/>
<dbReference type="eggNOG" id="ENOG502QW2I">
    <property type="taxonomic scope" value="Eukaryota"/>
</dbReference>
<dbReference type="HOGENOM" id="CLU_022381_5_0_1"/>
<dbReference type="InParanoid" id="Q5A4E3"/>
<dbReference type="OMA" id="DWADWYS"/>
<dbReference type="OrthoDB" id="409543at2759"/>
<dbReference type="Proteomes" id="UP000000559">
    <property type="component" value="Chromosome 3"/>
</dbReference>
<dbReference type="GO" id="GO:0005789">
    <property type="term" value="C:endoplasmic reticulum membrane"/>
    <property type="evidence" value="ECO:0007669"/>
    <property type="project" value="UniProtKB-SubCell"/>
</dbReference>
<dbReference type="GO" id="GO:0005794">
    <property type="term" value="C:Golgi apparatus"/>
    <property type="evidence" value="ECO:0000314"/>
    <property type="project" value="CGD"/>
</dbReference>
<dbReference type="GO" id="GO:0000136">
    <property type="term" value="C:mannan polymerase complex"/>
    <property type="evidence" value="ECO:0000318"/>
    <property type="project" value="GO_Central"/>
</dbReference>
<dbReference type="GO" id="GO:0000009">
    <property type="term" value="F:alpha-1,6-mannosyltransferase activity"/>
    <property type="evidence" value="ECO:0000318"/>
    <property type="project" value="GO_Central"/>
</dbReference>
<dbReference type="GO" id="GO:0033164">
    <property type="term" value="F:glycolipid 1,6-alpha-mannosyltransferase activity"/>
    <property type="evidence" value="ECO:0007669"/>
    <property type="project" value="UniProtKB-EC"/>
</dbReference>
<dbReference type="GO" id="GO:0034605">
    <property type="term" value="P:cellular response to heat"/>
    <property type="evidence" value="ECO:0000315"/>
    <property type="project" value="CGD"/>
</dbReference>
<dbReference type="GO" id="GO:0009267">
    <property type="term" value="P:cellular response to starvation"/>
    <property type="evidence" value="ECO:0000315"/>
    <property type="project" value="CGD"/>
</dbReference>
<dbReference type="GO" id="GO:0030447">
    <property type="term" value="P:filamentous growth"/>
    <property type="evidence" value="ECO:0000315"/>
    <property type="project" value="CGD"/>
</dbReference>
<dbReference type="GO" id="GO:0036170">
    <property type="term" value="P:filamentous growth of a population of unicellular organisms in response to starvation"/>
    <property type="evidence" value="ECO:0000315"/>
    <property type="project" value="CGD"/>
</dbReference>
<dbReference type="GO" id="GO:0006491">
    <property type="term" value="P:N-glycan processing"/>
    <property type="evidence" value="ECO:0000315"/>
    <property type="project" value="CGD"/>
</dbReference>
<dbReference type="GO" id="GO:0006487">
    <property type="term" value="P:protein N-linked glycosylation"/>
    <property type="evidence" value="ECO:0000318"/>
    <property type="project" value="GO_Central"/>
</dbReference>
<dbReference type="FunFam" id="3.90.550.20:FF:000002">
    <property type="entry name" value="Initiation-specific alpha-1,6-mannosyltransferase"/>
    <property type="match status" value="1"/>
</dbReference>
<dbReference type="Gene3D" id="3.90.550.20">
    <property type="match status" value="1"/>
</dbReference>
<dbReference type="InterPro" id="IPR007577">
    <property type="entry name" value="GlycoTrfase_DXD_sugar-bd_CS"/>
</dbReference>
<dbReference type="InterPro" id="IPR029044">
    <property type="entry name" value="Nucleotide-diphossugar_trans"/>
</dbReference>
<dbReference type="InterPro" id="IPR039367">
    <property type="entry name" value="Och1-like"/>
</dbReference>
<dbReference type="PANTHER" id="PTHR31834">
    <property type="entry name" value="INITIATION-SPECIFIC ALPHA-1,6-MANNOSYLTRANSFERASE"/>
    <property type="match status" value="1"/>
</dbReference>
<dbReference type="PANTHER" id="PTHR31834:SF1">
    <property type="entry name" value="INITIATION-SPECIFIC ALPHA-1,6-MANNOSYLTRANSFERASE"/>
    <property type="match status" value="1"/>
</dbReference>
<dbReference type="Pfam" id="PF04488">
    <property type="entry name" value="Gly_transf_sug"/>
    <property type="match status" value="1"/>
</dbReference>
<dbReference type="SUPFAM" id="SSF53448">
    <property type="entry name" value="Nucleotide-diphospho-sugar transferases"/>
    <property type="match status" value="1"/>
</dbReference>
<reference key="1">
    <citation type="journal article" date="2004" name="Proc. Natl. Acad. Sci. U.S.A.">
        <title>The diploid genome sequence of Candida albicans.</title>
        <authorList>
            <person name="Jones T."/>
            <person name="Federspiel N.A."/>
            <person name="Chibana H."/>
            <person name="Dungan J."/>
            <person name="Kalman S."/>
            <person name="Magee B.B."/>
            <person name="Newport G."/>
            <person name="Thorstenson Y.R."/>
            <person name="Agabian N."/>
            <person name="Magee P.T."/>
            <person name="Davis R.W."/>
            <person name="Scherer S."/>
        </authorList>
    </citation>
    <scope>NUCLEOTIDE SEQUENCE [LARGE SCALE GENOMIC DNA]</scope>
    <source>
        <strain>SC5314 / ATCC MYA-2876</strain>
    </source>
</reference>
<reference key="2">
    <citation type="journal article" date="2007" name="Genome Biol.">
        <title>Assembly of the Candida albicans genome into sixteen supercontigs aligned on the eight chromosomes.</title>
        <authorList>
            <person name="van het Hoog M."/>
            <person name="Rast T.J."/>
            <person name="Martchenko M."/>
            <person name="Grindle S."/>
            <person name="Dignard D."/>
            <person name="Hogues H."/>
            <person name="Cuomo C."/>
            <person name="Berriman M."/>
            <person name="Scherer S."/>
            <person name="Magee B.B."/>
            <person name="Whiteway M."/>
            <person name="Chibana H."/>
            <person name="Nantel A."/>
            <person name="Magee P.T."/>
        </authorList>
    </citation>
    <scope>GENOME REANNOTATION</scope>
    <source>
        <strain>SC5314 / ATCC MYA-2876</strain>
    </source>
</reference>
<reference key="3">
    <citation type="journal article" date="2013" name="Genome Biol.">
        <title>Assembly of a phased diploid Candida albicans genome facilitates allele-specific measurements and provides a simple model for repeat and indel structure.</title>
        <authorList>
            <person name="Muzzey D."/>
            <person name="Schwartz K."/>
            <person name="Weissman J.S."/>
            <person name="Sherlock G."/>
        </authorList>
    </citation>
    <scope>NUCLEOTIDE SEQUENCE [LARGE SCALE GENOMIC DNA]</scope>
    <scope>GENOME REANNOTATION</scope>
    <source>
        <strain>SC5314 / ATCC MYA-2876</strain>
    </source>
</reference>
<reference key="4">
    <citation type="journal article" date="2006" name="J. Biol. Chem.">
        <title>Outer chain N-glycans are required for cell wall integrity and virulence of Candida albicans.</title>
        <authorList>
            <person name="Bates S."/>
            <person name="Hughes H.B."/>
            <person name="Munro C.A."/>
            <person name="Thomas W.P."/>
            <person name="MacCallum D.M."/>
            <person name="Bertram G."/>
            <person name="Atrih A."/>
            <person name="Ferguson M.A."/>
            <person name="Brown A.J."/>
            <person name="Odds F.C."/>
            <person name="Gow N.A."/>
        </authorList>
    </citation>
    <scope>DISRUPTION PHENOTYPE</scope>
    <scope>FUNCTION</scope>
</reference>
<reference key="5">
    <citation type="journal article" date="2006" name="J. Clin. Invest.">
        <title>Immune sensing of Candida albicans requires cooperative recognition of mannans and glucans by lectin and Toll-like receptors.</title>
        <authorList>
            <person name="Netea M.G."/>
            <person name="Gow N.A."/>
            <person name="Munro C.A."/>
            <person name="Bates S."/>
            <person name="Collins C."/>
            <person name="Ferwerda G."/>
            <person name="Hobson R.P."/>
            <person name="Bertram G."/>
            <person name="Hughes H.B."/>
            <person name="Jansen T."/>
            <person name="Jacobs L."/>
            <person name="Buurman E.T."/>
            <person name="Gijzen K."/>
            <person name="Williams D.L."/>
            <person name="Torensma R."/>
            <person name="McKinnon A."/>
            <person name="MacCallum D.M."/>
            <person name="Odds F.C."/>
            <person name="Van der Meer J.W."/>
            <person name="Brown A.J."/>
            <person name="Kullberg B.J."/>
        </authorList>
    </citation>
    <scope>DISRUPTION PHENOTYPE</scope>
    <scope>FUNCTION</scope>
</reference>
<reference key="6">
    <citation type="journal article" date="2006" name="Mol. Biol. Cell">
        <title>Yeast-to-hyphal transition triggers formin-dependent Golgi localization to the growing tip in Candida albicans.</title>
        <authorList>
            <person name="Rida P.C."/>
            <person name="Nishikawa A."/>
            <person name="Won G.Y."/>
            <person name="Dean N."/>
        </authorList>
    </citation>
    <scope>SUBCELLULAR LOCATION</scope>
</reference>
<reference key="7">
    <citation type="journal article" date="2008" name="Infect. Immun.">
        <title>Beta-1,2 oligomannose adhesin epitopes are widely distributed over the different families of Candida albicans cell wall mannoproteins and are associated through both N- and O-glycosylation processes.</title>
        <authorList>
            <person name="Fradin C."/>
            <person name="Slomianny M.C."/>
            <person name="Mille C."/>
            <person name="Masset A."/>
            <person name="Robert R."/>
            <person name="Sendid B."/>
            <person name="Ernst J.F."/>
            <person name="Michalski J.C."/>
            <person name="Poulain D."/>
        </authorList>
    </citation>
    <scope>DISRUPTION PHENOTYPE</scope>
    <scope>FUNCTION</scope>
</reference>
<reference key="8">
    <citation type="journal article" date="2009" name="J. Infect. Dis.">
        <title>Bypassing pathogen-induced inflammasome activation for the regulation of interleukin-1beta production by the fungal pathogen Candida albicans.</title>
        <authorList>
            <person name="van de Veerdonk F.L."/>
            <person name="Joosten L.A."/>
            <person name="Devesa I."/>
            <person name="Mora-Montes H.M."/>
            <person name="Kanneganti T.D."/>
            <person name="Dinarello C.A."/>
            <person name="van der Meer J.W."/>
            <person name="Gow N.A."/>
            <person name="Kullberg B.J."/>
            <person name="Netea M.G."/>
        </authorList>
    </citation>
    <scope>DISRUPTION PHENOTYPE</scope>
    <scope>FUNCTION</scope>
</reference>
<reference key="9">
    <citation type="journal article" date="2011" name="Med. Mycol.">
        <title>Glycosylation status of the C. albicans cell wall affects the efficiency of neutrophil phagocytosis and killing but not cytokine signaling.</title>
        <authorList>
            <person name="Sheth C.C."/>
            <person name="Hall R."/>
            <person name="Lewis L."/>
            <person name="Brown A.J."/>
            <person name="Odds F.C."/>
            <person name="Erwig L.P."/>
            <person name="Gow N.A."/>
        </authorList>
    </citation>
    <scope>DISRUPTION PHENOTYPE</scope>
    <scope>FUNCTION</scope>
</reference>
<reference key="10">
    <citation type="journal article" date="2013" name="Fungal Genet. Biol.">
        <title>Reporters for the analysis of N-glycosylation in Candida albicans.</title>
        <authorList>
            <person name="Shahana S."/>
            <person name="Mora-Montes H.M."/>
            <person name="Castillo L."/>
            <person name="Bohovych I."/>
            <person name="Sheth C.C."/>
            <person name="Odds F.C."/>
            <person name="Gow N.A."/>
            <person name="Brown A.J."/>
        </authorList>
    </citation>
    <scope>DISRUPTION PHENOTYPE</scope>
    <scope>FUNCTION</scope>
</reference>
<evidence type="ECO:0000250" key="1">
    <source>
        <dbReference type="UniProtKB" id="P31755"/>
    </source>
</evidence>
<evidence type="ECO:0000255" key="2"/>
<evidence type="ECO:0000269" key="3">
    <source>
    </source>
</evidence>
<evidence type="ECO:0000269" key="4">
    <source>
    </source>
</evidence>
<evidence type="ECO:0000269" key="5">
    <source>
    </source>
</evidence>
<evidence type="ECO:0000269" key="6">
    <source>
    </source>
</evidence>
<evidence type="ECO:0000269" key="7">
    <source>
    </source>
</evidence>
<evidence type="ECO:0000269" key="8">
    <source>
    </source>
</evidence>
<evidence type="ECO:0000269" key="9">
    <source>
    </source>
</evidence>
<evidence type="ECO:0000303" key="10">
    <source>
    </source>
</evidence>
<evidence type="ECO:0000305" key="11"/>